<name>MPRD_MOUSE</name>
<proteinExistence type="evidence at protein level"/>
<gene>
    <name type="primary">M6pr</name>
    <name type="synonym">46mpr</name>
</gene>
<evidence type="ECO:0000250" key="1"/>
<evidence type="ECO:0000255" key="2"/>
<evidence type="ECO:0000255" key="3">
    <source>
        <dbReference type="PROSITE-ProRule" id="PRU01262"/>
    </source>
</evidence>
<evidence type="ECO:0000256" key="4">
    <source>
        <dbReference type="SAM" id="MobiDB-lite"/>
    </source>
</evidence>
<evidence type="ECO:0000269" key="5">
    <source>
    </source>
</evidence>
<evidence type="ECO:0000269" key="6">
    <source>
    </source>
</evidence>
<evidence type="ECO:0000305" key="7"/>
<evidence type="ECO:0007744" key="8">
    <source>
    </source>
</evidence>
<comment type="function">
    <text>Transport of phosphorylated lysosomal enzymes from the Golgi complex and the cell surface to lysosomes. Lysosomal enzymes bearing phosphomannosyl residues bind specifically to mannose-6-phosphate receptors in the Golgi apparatus and the resulting receptor-ligand complex is transported to an acidic prelyosomal compartment where the low pH mediates the dissociation of the complex.</text>
</comment>
<comment type="subunit">
    <text evidence="1">Homodimer. Binds GGA1, GGA2 and GGA3 (By similarity).</text>
</comment>
<comment type="subcellular location">
    <subcellularLocation>
        <location>Lysosome membrane</location>
        <topology>Single-pass type I membrane protein</topology>
    </subcellularLocation>
</comment>
<comment type="domain">
    <text>The extracellular domain is homologous to the repeating units (of approximately 147 AA) of the cation-independent mannose 6-phosphate receptor.</text>
</comment>
<comment type="miscellaneous">
    <text>This receptor has optimal binding in the presence of divalent cations.</text>
</comment>
<keyword id="KW-1015">Disulfide bond</keyword>
<keyword id="KW-0325">Glycoprotein</keyword>
<keyword id="KW-0458">Lysosome</keyword>
<keyword id="KW-0472">Membrane</keyword>
<keyword id="KW-0597">Phosphoprotein</keyword>
<keyword id="KW-0675">Receptor</keyword>
<keyword id="KW-1185">Reference proteome</keyword>
<keyword id="KW-0732">Signal</keyword>
<keyword id="KW-0812">Transmembrane</keyword>
<keyword id="KW-1133">Transmembrane helix</keyword>
<keyword id="KW-0813">Transport</keyword>
<sequence>MFPFSGCWRTELLLLLLLAVAVRESWQIEEKSCDLVGEKDKESKNEVALLERLRPLFNKSFESTVGQGSDTYSYIFRVCREASNHSSGAGLVQINKSNDKETVVGRINETHIFNGSNWIMLIYKGGDEYDNHCGKEQRRAVVMISCNRHTLAANFNPVSEERGKVQDCFYLFEMDSSLACSPEVSHLSVGSILLVIFASLVAVYIIGGFLYQRLVVGAKGMEQFPHLAFWQDLGNLVADGCDFVCRSKPRNVPAAYRGVGDDQLGEESEERDDHLLPM</sequence>
<protein>
    <recommendedName>
        <fullName>Cation-dependent mannose-6-phosphate receptor</fullName>
        <shortName>CD Man-6-P receptor</shortName>
        <shortName>CD-MPR</shortName>
    </recommendedName>
    <alternativeName>
        <fullName>46 kDa mannose 6-phosphate receptor</fullName>
        <shortName>MPR 46</shortName>
    </alternativeName>
</protein>
<feature type="signal peptide">
    <location>
        <begin position="1"/>
        <end position="21"/>
    </location>
</feature>
<feature type="chain" id="PRO_0000019227" description="Cation-dependent mannose-6-phosphate receptor">
    <location>
        <begin position="22"/>
        <end position="278"/>
    </location>
</feature>
<feature type="topological domain" description="Lumenal" evidence="2">
    <location>
        <begin position="22"/>
        <end position="186"/>
    </location>
</feature>
<feature type="transmembrane region" description="Helical" evidence="2">
    <location>
        <begin position="187"/>
        <end position="211"/>
    </location>
</feature>
<feature type="topological domain" description="Cytoplasmic" evidence="2">
    <location>
        <begin position="212"/>
        <end position="278"/>
    </location>
</feature>
<feature type="domain" description="MRH" evidence="3">
    <location>
        <begin position="31"/>
        <end position="182"/>
    </location>
</feature>
<feature type="region of interest" description="Disordered" evidence="4">
    <location>
        <begin position="257"/>
        <end position="278"/>
    </location>
</feature>
<feature type="modified residue" description="Phosphoserine" evidence="8">
    <location>
        <position position="268"/>
    </location>
</feature>
<feature type="glycosylation site" description="N-linked (GlcNAc...) asparagine" evidence="2">
    <location>
        <position position="58"/>
    </location>
</feature>
<feature type="glycosylation site" description="N-linked (GlcNAc...) asparagine" evidence="5 6">
    <location>
        <position position="84"/>
    </location>
</feature>
<feature type="glycosylation site" description="N-linked (GlcNAc...) asparagine" evidence="2">
    <location>
        <position position="95"/>
    </location>
</feature>
<feature type="glycosylation site" description="N-linked (GlcNAc...) asparagine" evidence="2">
    <location>
        <position position="108"/>
    </location>
</feature>
<feature type="glycosylation site" description="N-linked (GlcNAc...) asparagine" evidence="2">
    <location>
        <position position="114"/>
    </location>
</feature>
<feature type="disulfide bond" evidence="3">
    <location>
        <begin position="33"/>
        <end position="79"/>
    </location>
</feature>
<feature type="disulfide bond" evidence="3">
    <location>
        <begin position="133"/>
        <end position="168"/>
    </location>
</feature>
<feature type="disulfide bond" evidence="3">
    <location>
        <begin position="146"/>
        <end position="180"/>
    </location>
</feature>
<feature type="sequence conflict" description="In Ref. 5; AAA39482." evidence="7" ref="5">
    <original>I</original>
    <variation>T</variation>
    <location>
        <position position="196"/>
    </location>
</feature>
<feature type="sequence conflict" description="In Ref. 5; AAA39482." evidence="7" ref="5">
    <original>M</original>
    <variation>T</variation>
    <location>
        <position position="221"/>
    </location>
</feature>
<feature type="sequence conflict" description="In Ref. 5; AAA39482." evidence="7" ref="5">
    <original>H</original>
    <variation>P</variation>
    <location>
        <position position="226"/>
    </location>
</feature>
<organism>
    <name type="scientific">Mus musculus</name>
    <name type="common">Mouse</name>
    <dbReference type="NCBI Taxonomy" id="10090"/>
    <lineage>
        <taxon>Eukaryota</taxon>
        <taxon>Metazoa</taxon>
        <taxon>Chordata</taxon>
        <taxon>Craniata</taxon>
        <taxon>Vertebrata</taxon>
        <taxon>Euteleostomi</taxon>
        <taxon>Mammalia</taxon>
        <taxon>Eutheria</taxon>
        <taxon>Euarchontoglires</taxon>
        <taxon>Glires</taxon>
        <taxon>Rodentia</taxon>
        <taxon>Myomorpha</taxon>
        <taxon>Muroidea</taxon>
        <taxon>Muridae</taxon>
        <taxon>Murinae</taxon>
        <taxon>Mus</taxon>
        <taxon>Mus</taxon>
    </lineage>
</organism>
<dbReference type="EMBL" id="X64068">
    <property type="protein sequence ID" value="CAA45423.1"/>
    <property type="molecule type" value="mRNA"/>
</dbReference>
<dbReference type="EMBL" id="X64070">
    <property type="protein sequence ID" value="CAA45426.1"/>
    <property type="molecule type" value="mRNA"/>
</dbReference>
<dbReference type="EMBL" id="X56831">
    <property type="protein sequence ID" value="CAA40162.1"/>
    <property type="molecule type" value="mRNA"/>
</dbReference>
<dbReference type="EMBL" id="M63286">
    <property type="protein sequence ID" value="AAA39735.1"/>
    <property type="molecule type" value="mRNA"/>
</dbReference>
<dbReference type="EMBL" id="BC027210">
    <property type="protein sequence ID" value="AAH27210.1"/>
    <property type="molecule type" value="mRNA"/>
</dbReference>
<dbReference type="EMBL" id="BC046956">
    <property type="protein sequence ID" value="AAH46956.1"/>
    <property type="molecule type" value="mRNA"/>
</dbReference>
<dbReference type="EMBL" id="BC080811">
    <property type="protein sequence ID" value="AAH80811.1"/>
    <property type="molecule type" value="mRNA"/>
</dbReference>
<dbReference type="EMBL" id="M58585">
    <property type="protein sequence ID" value="AAA39482.1"/>
    <property type="molecule type" value="mRNA"/>
</dbReference>
<dbReference type="CCDS" id="CCDS20493.1"/>
<dbReference type="PIR" id="A40399">
    <property type="entry name" value="A40399"/>
</dbReference>
<dbReference type="RefSeq" id="NP_034879.2">
    <property type="nucleotide sequence ID" value="NM_010749.7"/>
</dbReference>
<dbReference type="SMR" id="P24668"/>
<dbReference type="BioGRID" id="201263">
    <property type="interactions" value="8"/>
</dbReference>
<dbReference type="FunCoup" id="P24668">
    <property type="interactions" value="3100"/>
</dbReference>
<dbReference type="IntAct" id="P24668">
    <property type="interactions" value="8"/>
</dbReference>
<dbReference type="STRING" id="10090.ENSMUSP00000108229"/>
<dbReference type="GlyConnect" id="2194">
    <property type="glycosylation" value="12 N-Linked glycans (2 sites)"/>
</dbReference>
<dbReference type="GlyCosmos" id="P24668">
    <property type="glycosylation" value="5 sites, 19 glycans"/>
</dbReference>
<dbReference type="GlyGen" id="P24668">
    <property type="glycosylation" value="5 sites, 14 N-linked glycans (3 sites)"/>
</dbReference>
<dbReference type="iPTMnet" id="P24668"/>
<dbReference type="PhosphoSitePlus" id="P24668"/>
<dbReference type="SwissPalm" id="P24668"/>
<dbReference type="jPOST" id="P24668"/>
<dbReference type="PaxDb" id="10090-ENSMUSP00000007602"/>
<dbReference type="PeptideAtlas" id="P24668"/>
<dbReference type="ProteomicsDB" id="252610"/>
<dbReference type="Pumba" id="P24668"/>
<dbReference type="Antibodypedia" id="11573">
    <property type="antibodies" value="276 antibodies from 31 providers"/>
</dbReference>
<dbReference type="DNASU" id="17113"/>
<dbReference type="Ensembl" id="ENSMUST00000007602.15">
    <property type="protein sequence ID" value="ENSMUSP00000007602.9"/>
    <property type="gene ID" value="ENSMUSG00000007458.15"/>
</dbReference>
<dbReference type="Ensembl" id="ENSMUST00000112610.2">
    <property type="protein sequence ID" value="ENSMUSP00000108229.2"/>
    <property type="gene ID" value="ENSMUSG00000007458.15"/>
</dbReference>
<dbReference type="GeneID" id="17113"/>
<dbReference type="KEGG" id="mmu:17113"/>
<dbReference type="UCSC" id="uc009dow.1">
    <property type="organism name" value="mouse"/>
</dbReference>
<dbReference type="AGR" id="MGI:96904"/>
<dbReference type="CTD" id="4074"/>
<dbReference type="MGI" id="MGI:96904">
    <property type="gene designation" value="M6pr"/>
</dbReference>
<dbReference type="VEuPathDB" id="HostDB:ENSMUSG00000007458"/>
<dbReference type="eggNOG" id="ENOG502QTJ5">
    <property type="taxonomic scope" value="Eukaryota"/>
</dbReference>
<dbReference type="GeneTree" id="ENSGT00390000002109"/>
<dbReference type="HOGENOM" id="CLU_058440_0_0_1"/>
<dbReference type="InParanoid" id="P24668"/>
<dbReference type="OMA" id="NYIYHFR"/>
<dbReference type="OrthoDB" id="29460at2759"/>
<dbReference type="PhylomeDB" id="P24668"/>
<dbReference type="TreeFam" id="TF328910"/>
<dbReference type="Reactome" id="R-MMU-432720">
    <property type="pathway name" value="Lysosome Vesicle Biogenesis"/>
</dbReference>
<dbReference type="Reactome" id="R-MMU-6811440">
    <property type="pathway name" value="Retrograde transport at the Trans-Golgi-Network"/>
</dbReference>
<dbReference type="Reactome" id="R-MMU-8856825">
    <property type="pathway name" value="Cargo recognition for clathrin-mediated endocytosis"/>
</dbReference>
<dbReference type="Reactome" id="R-MMU-8856828">
    <property type="pathway name" value="Clathrin-mediated endocytosis"/>
</dbReference>
<dbReference type="Reactome" id="R-MMU-9840310">
    <property type="pathway name" value="Glycosphingolipid catabolism"/>
</dbReference>
<dbReference type="BioGRID-ORCS" id="17113">
    <property type="hits" value="3 hits in 77 CRISPR screens"/>
</dbReference>
<dbReference type="ChiTaRS" id="M6pr">
    <property type="organism name" value="mouse"/>
</dbReference>
<dbReference type="PRO" id="PR:P24668"/>
<dbReference type="Proteomes" id="UP000000589">
    <property type="component" value="Chromosome 6"/>
</dbReference>
<dbReference type="RNAct" id="P24668">
    <property type="molecule type" value="protein"/>
</dbReference>
<dbReference type="Bgee" id="ENSMUSG00000007458">
    <property type="expression patterns" value="Expressed in proximal tubule and 126 other cell types or tissues"/>
</dbReference>
<dbReference type="ExpressionAtlas" id="P24668">
    <property type="expression patterns" value="baseline and differential"/>
</dbReference>
<dbReference type="GO" id="GO:0005768">
    <property type="term" value="C:endosome"/>
    <property type="evidence" value="ECO:0000266"/>
    <property type="project" value="MGI"/>
</dbReference>
<dbReference type="GO" id="GO:0005794">
    <property type="term" value="C:Golgi apparatus"/>
    <property type="evidence" value="ECO:0007669"/>
    <property type="project" value="InterPro"/>
</dbReference>
<dbReference type="GO" id="GO:0005770">
    <property type="term" value="C:late endosome"/>
    <property type="evidence" value="ECO:0000314"/>
    <property type="project" value="MGI"/>
</dbReference>
<dbReference type="GO" id="GO:0005765">
    <property type="term" value="C:lysosomal membrane"/>
    <property type="evidence" value="ECO:0007669"/>
    <property type="project" value="UniProtKB-SubCell"/>
</dbReference>
<dbReference type="GO" id="GO:0048471">
    <property type="term" value="C:perinuclear region of cytoplasm"/>
    <property type="evidence" value="ECO:0007669"/>
    <property type="project" value="Ensembl"/>
</dbReference>
<dbReference type="GO" id="GO:0019904">
    <property type="term" value="F:protein domain specific binding"/>
    <property type="evidence" value="ECO:0007669"/>
    <property type="project" value="InterPro"/>
</dbReference>
<dbReference type="GO" id="GO:1905394">
    <property type="term" value="F:retromer complex binding"/>
    <property type="evidence" value="ECO:0007669"/>
    <property type="project" value="Ensembl"/>
</dbReference>
<dbReference type="GO" id="GO:0006886">
    <property type="term" value="P:intracellular protein transport"/>
    <property type="evidence" value="ECO:0000304"/>
    <property type="project" value="MGI"/>
</dbReference>
<dbReference type="GO" id="GO:0007041">
    <property type="term" value="P:lysosomal transport"/>
    <property type="evidence" value="ECO:0000314"/>
    <property type="project" value="UniProtKB"/>
</dbReference>
<dbReference type="GO" id="GO:0006622">
    <property type="term" value="P:protein targeting to lysosome"/>
    <property type="evidence" value="ECO:0007669"/>
    <property type="project" value="InterPro"/>
</dbReference>
<dbReference type="GO" id="GO:0033299">
    <property type="term" value="P:secretion of lysosomal enzymes"/>
    <property type="evidence" value="ECO:0000314"/>
    <property type="project" value="MGI"/>
</dbReference>
<dbReference type="FunFam" id="2.70.130.10:FF:000008">
    <property type="entry name" value="Cation-dependent mannose-6-phosphate receptor"/>
    <property type="match status" value="1"/>
</dbReference>
<dbReference type="Gene3D" id="2.70.130.10">
    <property type="entry name" value="Mannose-6-phosphate receptor binding domain"/>
    <property type="match status" value="1"/>
</dbReference>
<dbReference type="InterPro" id="IPR028927">
    <property type="entry name" value="Man-6-P_rcpt"/>
</dbReference>
<dbReference type="InterPro" id="IPR000296">
    <property type="entry name" value="Man-6-P_rcpt_cation_dep"/>
</dbReference>
<dbReference type="InterPro" id="IPR009011">
    <property type="entry name" value="Man6P_isomerase_rcpt-bd_dom_sf"/>
</dbReference>
<dbReference type="InterPro" id="IPR044865">
    <property type="entry name" value="MRH_dom"/>
</dbReference>
<dbReference type="PANTHER" id="PTHR15071:SF29">
    <property type="entry name" value="CATION-DEPENDENT MANNOSE-6-PHOSPHATE RECEPTOR"/>
    <property type="match status" value="1"/>
</dbReference>
<dbReference type="PANTHER" id="PTHR15071">
    <property type="entry name" value="MANNOSE-6-PHOSPHATE RECEPTOR FAMILY MEMBER"/>
    <property type="match status" value="1"/>
</dbReference>
<dbReference type="Pfam" id="PF02157">
    <property type="entry name" value="Man-6-P_recep"/>
    <property type="match status" value="1"/>
</dbReference>
<dbReference type="PRINTS" id="PR00715">
    <property type="entry name" value="MAN6PRECEPTR"/>
</dbReference>
<dbReference type="SUPFAM" id="SSF50911">
    <property type="entry name" value="Mannose 6-phosphate receptor domain"/>
    <property type="match status" value="1"/>
</dbReference>
<dbReference type="PROSITE" id="PS51914">
    <property type="entry name" value="MRH"/>
    <property type="match status" value="1"/>
</dbReference>
<reference key="1">
    <citation type="journal article" date="1992" name="J. Biol. Chem.">
        <title>Gene and pseudogene of the mouse cation-dependent mannose 6-phosphate receptor. Genomic organization, expression, and chromosomal localization.</title>
        <authorList>
            <person name="Ludwig T."/>
            <person name="Ruether U."/>
            <person name="Metzger R."/>
            <person name="Copeland N.G."/>
            <person name="Jenkins N.A."/>
            <person name="Lobel P."/>
            <person name="Hoflack B."/>
        </authorList>
    </citation>
    <scope>NUCLEOTIDE SEQUENCE [MRNA]</scope>
    <source>
        <tissue>Liver</tissue>
    </source>
</reference>
<reference key="2">
    <citation type="journal article" date="1991" name="Biol. Chem. Hoppe-Seyler">
        <title>Molecular cloning of the mouse 46-kDa mannose 6-phosphate receptor (MPR 46).</title>
        <authorList>
            <person name="Koester A."/>
            <person name="Nagel G."/>
            <person name="von Figura K."/>
            <person name="Pohlmann R."/>
        </authorList>
    </citation>
    <scope>NUCLEOTIDE SEQUENCE [MRNA]</scope>
    <source>
        <strain>C57BL/6J</strain>
    </source>
</reference>
<reference key="3">
    <citation type="journal article" date="1991" name="J. Biol. Chem.">
        <title>Cloning, sequencing, and functional characterization of the murine 46-kDa mannose 6-phosphate receptor.</title>
        <authorList>
            <person name="Ma Z."/>
            <person name="Grubb J.H."/>
            <person name="Sly W.S."/>
        </authorList>
    </citation>
    <scope>NUCLEOTIDE SEQUENCE [MRNA]</scope>
</reference>
<reference key="4">
    <citation type="journal article" date="2004" name="Genome Res.">
        <title>The status, quality, and expansion of the NIH full-length cDNA project: the Mammalian Gene Collection (MGC).</title>
        <authorList>
            <consortium name="The MGC Project Team"/>
        </authorList>
    </citation>
    <scope>NUCLEOTIDE SEQUENCE [LARGE SCALE MRNA]</scope>
    <source>
        <strain>FVB/N</strain>
        <tissue>Mammary gland</tissue>
        <tissue>Olfactory epithelium</tissue>
    </source>
</reference>
<reference key="5">
    <citation type="journal article" date="1991" name="J. Biol. Chem.">
        <title>Differential regulation of mannose 6-phosphate receptors and their ligands during the myogenic development of C2 cells.</title>
        <authorList>
            <person name="Szebenyi G."/>
            <person name="Rotwein P."/>
        </authorList>
    </citation>
    <scope>NUCLEOTIDE SEQUENCE [MRNA] OF 156-233</scope>
</reference>
<reference key="6">
    <citation type="journal article" date="2009" name="Immunity">
        <title>The phagosomal proteome in interferon-gamma-activated macrophages.</title>
        <authorList>
            <person name="Trost M."/>
            <person name="English L."/>
            <person name="Lemieux S."/>
            <person name="Courcelles M."/>
            <person name="Desjardins M."/>
            <person name="Thibault P."/>
        </authorList>
    </citation>
    <scope>PHOSPHORYLATION [LARGE SCALE ANALYSIS] AT SER-268</scope>
    <scope>IDENTIFICATION BY MASS SPECTROMETRY [LARGE SCALE ANALYSIS]</scope>
</reference>
<reference key="7">
    <citation type="journal article" date="2009" name="Mol. Cell. Proteomics">
        <title>The mouse C2C12 myoblast cell surface N-linked glycoproteome: identification, glycosite occupancy, and membrane orientation.</title>
        <authorList>
            <person name="Gundry R.L."/>
            <person name="Raginski K."/>
            <person name="Tarasova Y."/>
            <person name="Tchernyshyov I."/>
            <person name="Bausch-Fluck D."/>
            <person name="Elliott S.T."/>
            <person name="Boheler K.R."/>
            <person name="Van Eyk J.E."/>
            <person name="Wollscheid B."/>
        </authorList>
    </citation>
    <scope>GLYCOSYLATION [LARGE SCALE ANALYSIS] AT ASN-84</scope>
    <source>
        <tissue>Myoblast</tissue>
    </source>
</reference>
<reference key="8">
    <citation type="journal article" date="2009" name="Nat. Biotechnol.">
        <title>Mass-spectrometric identification and relative quantification of N-linked cell surface glycoproteins.</title>
        <authorList>
            <person name="Wollscheid B."/>
            <person name="Bausch-Fluck D."/>
            <person name="Henderson C."/>
            <person name="O'Brien R."/>
            <person name="Bibel M."/>
            <person name="Schiess R."/>
            <person name="Aebersold R."/>
            <person name="Watts J.D."/>
        </authorList>
    </citation>
    <scope>GLYCOSYLATION [LARGE SCALE ANALYSIS] AT ASN-84</scope>
</reference>
<reference key="9">
    <citation type="journal article" date="2010" name="Cell">
        <title>A tissue-specific atlas of mouse protein phosphorylation and expression.</title>
        <authorList>
            <person name="Huttlin E.L."/>
            <person name="Jedrychowski M.P."/>
            <person name="Elias J.E."/>
            <person name="Goswami T."/>
            <person name="Rad R."/>
            <person name="Beausoleil S.A."/>
            <person name="Villen J."/>
            <person name="Haas W."/>
            <person name="Sowa M.E."/>
            <person name="Gygi S.P."/>
        </authorList>
    </citation>
    <scope>IDENTIFICATION BY MASS SPECTROMETRY [LARGE SCALE ANALYSIS]</scope>
    <source>
        <tissue>Brain</tissue>
        <tissue>Brown adipose tissue</tissue>
        <tissue>Heart</tissue>
        <tissue>Kidney</tissue>
        <tissue>Liver</tissue>
        <tissue>Lung</tissue>
        <tissue>Pancreas</tissue>
        <tissue>Spleen</tissue>
        <tissue>Testis</tissue>
    </source>
</reference>
<accession>P24668</accession>